<name>NUDC_PHOLL</name>
<evidence type="ECO:0000255" key="1">
    <source>
        <dbReference type="HAMAP-Rule" id="MF_00297"/>
    </source>
</evidence>
<proteinExistence type="inferred from homology"/>
<accession>Q7N961</accession>
<sequence length="257" mass="29827">MMMQQQITGTEHGWWIISNENRIWLPKGELPFGMATQWSLQGKIALPIGEWQGEKVWLIRQKMVSNMVSLRQIVASDRGLFQLAGRGVQLAEFYRSHQYCGYCGNEMHHSVSEWACLCHHCHERYYPQIAPCIIVGIRRDDHILLAQHQHHRGGVYTVLAGFVEVGETLEEAVVREVMEESNIKIRNLRYVASQPWPFPHSLMMAFLADYDSGEIRHDPQELISADWYHYDQLPLIPPHNTIARRLIEDTIVLCRNT</sequence>
<gene>
    <name evidence="1" type="primary">nudC</name>
    <name type="ordered locus">plu0488</name>
</gene>
<reference key="1">
    <citation type="journal article" date="2003" name="Nat. Biotechnol.">
        <title>The genome sequence of the entomopathogenic bacterium Photorhabdus luminescens.</title>
        <authorList>
            <person name="Duchaud E."/>
            <person name="Rusniok C."/>
            <person name="Frangeul L."/>
            <person name="Buchrieser C."/>
            <person name="Givaudan A."/>
            <person name="Taourit S."/>
            <person name="Bocs S."/>
            <person name="Boursaux-Eude C."/>
            <person name="Chandler M."/>
            <person name="Charles J.-F."/>
            <person name="Dassa E."/>
            <person name="Derose R."/>
            <person name="Derzelle S."/>
            <person name="Freyssinet G."/>
            <person name="Gaudriault S."/>
            <person name="Medigue C."/>
            <person name="Lanois A."/>
            <person name="Powell K."/>
            <person name="Siguier P."/>
            <person name="Vincent R."/>
            <person name="Wingate V."/>
            <person name="Zouine M."/>
            <person name="Glaser P."/>
            <person name="Boemare N."/>
            <person name="Danchin A."/>
            <person name="Kunst F."/>
        </authorList>
    </citation>
    <scope>NUCLEOTIDE SEQUENCE [LARGE SCALE GENOMIC DNA]</scope>
    <source>
        <strain>DSM 15139 / CIP 105565 / TT01</strain>
    </source>
</reference>
<keyword id="KW-0378">Hydrolase</keyword>
<keyword id="KW-0460">Magnesium</keyword>
<keyword id="KW-0464">Manganese</keyword>
<keyword id="KW-0479">Metal-binding</keyword>
<keyword id="KW-0520">NAD</keyword>
<keyword id="KW-1185">Reference proteome</keyword>
<keyword id="KW-0862">Zinc</keyword>
<organism>
    <name type="scientific">Photorhabdus laumondii subsp. laumondii (strain DSM 15139 / CIP 105565 / TT01)</name>
    <name type="common">Photorhabdus luminescens subsp. laumondii</name>
    <dbReference type="NCBI Taxonomy" id="243265"/>
    <lineage>
        <taxon>Bacteria</taxon>
        <taxon>Pseudomonadati</taxon>
        <taxon>Pseudomonadota</taxon>
        <taxon>Gammaproteobacteria</taxon>
        <taxon>Enterobacterales</taxon>
        <taxon>Morganellaceae</taxon>
        <taxon>Photorhabdus</taxon>
    </lineage>
</organism>
<feature type="chain" id="PRO_0000056972" description="NAD-capped RNA hydrolase NudC">
    <location>
        <begin position="1"/>
        <end position="257"/>
    </location>
</feature>
<feature type="domain" description="Nudix hydrolase" evidence="1">
    <location>
        <begin position="127"/>
        <end position="251"/>
    </location>
</feature>
<feature type="short sequence motif" description="Nudix box" evidence="1">
    <location>
        <begin position="161"/>
        <end position="182"/>
    </location>
</feature>
<feature type="binding site" evidence="1">
    <location>
        <position position="27"/>
    </location>
    <ligand>
        <name>substrate</name>
    </ligand>
</feature>
<feature type="binding site" evidence="1">
    <location>
        <position position="71"/>
    </location>
    <ligand>
        <name>substrate</name>
    </ligand>
</feature>
<feature type="binding site" evidence="1">
    <location>
        <position position="100"/>
    </location>
    <ligand>
        <name>Zn(2+)</name>
        <dbReference type="ChEBI" id="CHEBI:29105"/>
    </ligand>
</feature>
<feature type="binding site" evidence="1">
    <location>
        <position position="103"/>
    </location>
    <ligand>
        <name>Zn(2+)</name>
        <dbReference type="ChEBI" id="CHEBI:29105"/>
    </ligand>
</feature>
<feature type="binding site" evidence="1">
    <location>
        <position position="113"/>
    </location>
    <ligand>
        <name>substrate</name>
    </ligand>
</feature>
<feature type="binding site" evidence="1">
    <location>
        <position position="118"/>
    </location>
    <ligand>
        <name>Zn(2+)</name>
        <dbReference type="ChEBI" id="CHEBI:29105"/>
    </ligand>
</feature>
<feature type="binding site" evidence="1">
    <location>
        <position position="121"/>
    </location>
    <ligand>
        <name>Zn(2+)</name>
        <dbReference type="ChEBI" id="CHEBI:29105"/>
    </ligand>
</feature>
<feature type="binding site" evidence="1">
    <location>
        <position position="126"/>
    </location>
    <ligand>
        <name>substrate</name>
    </ligand>
</feature>
<feature type="binding site" evidence="1">
    <location>
        <position position="160"/>
    </location>
    <ligand>
        <name>a divalent metal cation</name>
        <dbReference type="ChEBI" id="CHEBI:60240"/>
        <label>1</label>
    </ligand>
</feature>
<feature type="binding site" evidence="1">
    <location>
        <position position="176"/>
    </location>
    <ligand>
        <name>a divalent metal cation</name>
        <dbReference type="ChEBI" id="CHEBI:60240"/>
        <label>2</label>
    </ligand>
</feature>
<feature type="binding site" evidence="1">
    <location>
        <position position="176"/>
    </location>
    <ligand>
        <name>a divalent metal cation</name>
        <dbReference type="ChEBI" id="CHEBI:60240"/>
        <label>3</label>
    </ligand>
</feature>
<feature type="binding site" evidence="1">
    <location>
        <position position="180"/>
    </location>
    <ligand>
        <name>a divalent metal cation</name>
        <dbReference type="ChEBI" id="CHEBI:60240"/>
        <label>1</label>
    </ligand>
</feature>
<feature type="binding site" evidence="1">
    <location>
        <position position="180"/>
    </location>
    <ligand>
        <name>a divalent metal cation</name>
        <dbReference type="ChEBI" id="CHEBI:60240"/>
        <label>3</label>
    </ligand>
</feature>
<feature type="binding site" evidence="1">
    <location>
        <begin position="194"/>
        <end position="201"/>
    </location>
    <ligand>
        <name>substrate</name>
    </ligand>
</feature>
<feature type="binding site" evidence="1">
    <location>
        <position position="221"/>
    </location>
    <ligand>
        <name>a divalent metal cation</name>
        <dbReference type="ChEBI" id="CHEBI:60240"/>
        <label>1</label>
    </ligand>
</feature>
<feature type="binding site" evidence="1">
    <location>
        <position position="221"/>
    </location>
    <ligand>
        <name>a divalent metal cation</name>
        <dbReference type="ChEBI" id="CHEBI:60240"/>
        <label>3</label>
    </ligand>
</feature>
<feature type="binding site" evidence="1">
    <location>
        <position position="243"/>
    </location>
    <ligand>
        <name>substrate</name>
    </ligand>
</feature>
<comment type="function">
    <text evidence="1">mRNA decapping enzyme that specifically removes the nicotinamide adenine dinucleotide (NAD) cap from a subset of mRNAs by hydrolyzing the diphosphate linkage to produce nicotinamide mononucleotide (NMN) and 5' monophosphate mRNA. The NAD-cap is present at the 5'-end of some mRNAs and stabilizes RNA against 5'-processing. Has preference for mRNAs with a 5'-end purine. Catalyzes the hydrolysis of a broad range of dinucleotide pyrophosphates.</text>
</comment>
<comment type="catalytic activity">
    <reaction evidence="1">
        <text>a 5'-end NAD(+)-phospho-ribonucleoside in mRNA + H2O = a 5'-end phospho-adenosine-phospho-ribonucleoside in mRNA + beta-nicotinamide D-ribonucleotide + 2 H(+)</text>
        <dbReference type="Rhea" id="RHEA:60876"/>
        <dbReference type="Rhea" id="RHEA-COMP:15698"/>
        <dbReference type="Rhea" id="RHEA-COMP:15719"/>
        <dbReference type="ChEBI" id="CHEBI:14649"/>
        <dbReference type="ChEBI" id="CHEBI:15377"/>
        <dbReference type="ChEBI" id="CHEBI:15378"/>
        <dbReference type="ChEBI" id="CHEBI:144029"/>
        <dbReference type="ChEBI" id="CHEBI:144051"/>
    </reaction>
    <physiologicalReaction direction="left-to-right" evidence="1">
        <dbReference type="Rhea" id="RHEA:60877"/>
    </physiologicalReaction>
</comment>
<comment type="catalytic activity">
    <reaction evidence="1">
        <text>NAD(+) + H2O = beta-nicotinamide D-ribonucleotide + AMP + 2 H(+)</text>
        <dbReference type="Rhea" id="RHEA:11800"/>
        <dbReference type="ChEBI" id="CHEBI:14649"/>
        <dbReference type="ChEBI" id="CHEBI:15377"/>
        <dbReference type="ChEBI" id="CHEBI:15378"/>
        <dbReference type="ChEBI" id="CHEBI:57540"/>
        <dbReference type="ChEBI" id="CHEBI:456215"/>
        <dbReference type="EC" id="3.6.1.22"/>
    </reaction>
</comment>
<comment type="catalytic activity">
    <reaction evidence="1">
        <text>NADH + H2O = reduced beta-nicotinamide D-ribonucleotide + AMP + 2 H(+)</text>
        <dbReference type="Rhea" id="RHEA:48868"/>
        <dbReference type="ChEBI" id="CHEBI:15377"/>
        <dbReference type="ChEBI" id="CHEBI:15378"/>
        <dbReference type="ChEBI" id="CHEBI:57945"/>
        <dbReference type="ChEBI" id="CHEBI:90832"/>
        <dbReference type="ChEBI" id="CHEBI:456215"/>
        <dbReference type="EC" id="3.6.1.22"/>
    </reaction>
</comment>
<comment type="cofactor">
    <cofactor evidence="1">
        <name>Mg(2+)</name>
        <dbReference type="ChEBI" id="CHEBI:18420"/>
    </cofactor>
    <cofactor evidence="1">
        <name>Mn(2+)</name>
        <dbReference type="ChEBI" id="CHEBI:29035"/>
    </cofactor>
    <text evidence="1">Divalent metal cations. Mg(2+) or Mn(2+).</text>
</comment>
<comment type="cofactor">
    <cofactor evidence="1">
        <name>Zn(2+)</name>
        <dbReference type="ChEBI" id="CHEBI:29105"/>
    </cofactor>
    <text evidence="1">Binds 1 zinc ion per subunit.</text>
</comment>
<comment type="subunit">
    <text evidence="1">Homodimer.</text>
</comment>
<comment type="similarity">
    <text evidence="1">Belongs to the Nudix hydrolase family. NudC subfamily.</text>
</comment>
<dbReference type="EC" id="3.6.1.-" evidence="1"/>
<dbReference type="EC" id="3.6.1.22" evidence="1"/>
<dbReference type="EMBL" id="BX571860">
    <property type="protein sequence ID" value="CAE12783.1"/>
    <property type="molecule type" value="Genomic_DNA"/>
</dbReference>
<dbReference type="SMR" id="Q7N961"/>
<dbReference type="STRING" id="243265.plu0488"/>
<dbReference type="KEGG" id="plu:plu0488"/>
<dbReference type="eggNOG" id="COG2816">
    <property type="taxonomic scope" value="Bacteria"/>
</dbReference>
<dbReference type="HOGENOM" id="CLU_037162_0_1_6"/>
<dbReference type="OrthoDB" id="9791656at2"/>
<dbReference type="Proteomes" id="UP000002514">
    <property type="component" value="Chromosome"/>
</dbReference>
<dbReference type="GO" id="GO:0005829">
    <property type="term" value="C:cytosol"/>
    <property type="evidence" value="ECO:0007669"/>
    <property type="project" value="TreeGrafter"/>
</dbReference>
<dbReference type="GO" id="GO:0000287">
    <property type="term" value="F:magnesium ion binding"/>
    <property type="evidence" value="ECO:0007669"/>
    <property type="project" value="UniProtKB-UniRule"/>
</dbReference>
<dbReference type="GO" id="GO:0030145">
    <property type="term" value="F:manganese ion binding"/>
    <property type="evidence" value="ECO:0007669"/>
    <property type="project" value="UniProtKB-UniRule"/>
</dbReference>
<dbReference type="GO" id="GO:0000210">
    <property type="term" value="F:NAD+ diphosphatase activity"/>
    <property type="evidence" value="ECO:0007669"/>
    <property type="project" value="UniProtKB-UniRule"/>
</dbReference>
<dbReference type="GO" id="GO:0035529">
    <property type="term" value="F:NADH pyrophosphatase activity"/>
    <property type="evidence" value="ECO:0007669"/>
    <property type="project" value="TreeGrafter"/>
</dbReference>
<dbReference type="GO" id="GO:0110153">
    <property type="term" value="F:RNA NAD-cap (NMN-forming) hydrolase activity"/>
    <property type="evidence" value="ECO:0007669"/>
    <property type="project" value="RHEA"/>
</dbReference>
<dbReference type="GO" id="GO:0008270">
    <property type="term" value="F:zinc ion binding"/>
    <property type="evidence" value="ECO:0007669"/>
    <property type="project" value="UniProtKB-UniRule"/>
</dbReference>
<dbReference type="GO" id="GO:0019677">
    <property type="term" value="P:NAD catabolic process"/>
    <property type="evidence" value="ECO:0007669"/>
    <property type="project" value="TreeGrafter"/>
</dbReference>
<dbReference type="GO" id="GO:0006734">
    <property type="term" value="P:NADH metabolic process"/>
    <property type="evidence" value="ECO:0007669"/>
    <property type="project" value="TreeGrafter"/>
</dbReference>
<dbReference type="GO" id="GO:0006742">
    <property type="term" value="P:NADP catabolic process"/>
    <property type="evidence" value="ECO:0007669"/>
    <property type="project" value="TreeGrafter"/>
</dbReference>
<dbReference type="CDD" id="cd03429">
    <property type="entry name" value="NUDIX_NADH_pyrophosphatase_Nudt13"/>
    <property type="match status" value="1"/>
</dbReference>
<dbReference type="FunFam" id="3.90.79.10:FF:000004">
    <property type="entry name" value="NADH pyrophosphatase"/>
    <property type="match status" value="1"/>
</dbReference>
<dbReference type="FunFam" id="3.90.79.20:FF:000001">
    <property type="entry name" value="NADH pyrophosphatase"/>
    <property type="match status" value="1"/>
</dbReference>
<dbReference type="Gene3D" id="3.90.79.20">
    <property type="match status" value="1"/>
</dbReference>
<dbReference type="Gene3D" id="3.90.79.10">
    <property type="entry name" value="Nucleoside Triphosphate Pyrophosphohydrolase"/>
    <property type="match status" value="1"/>
</dbReference>
<dbReference type="HAMAP" id="MF_00297">
    <property type="entry name" value="Nudix_NudC"/>
    <property type="match status" value="1"/>
</dbReference>
<dbReference type="InterPro" id="IPR050241">
    <property type="entry name" value="NAD-cap_RNA_hydrolase_NudC"/>
</dbReference>
<dbReference type="InterPro" id="IPR049734">
    <property type="entry name" value="NudC-like_C"/>
</dbReference>
<dbReference type="InterPro" id="IPR015797">
    <property type="entry name" value="NUDIX_hydrolase-like_dom_sf"/>
</dbReference>
<dbReference type="InterPro" id="IPR020084">
    <property type="entry name" value="NUDIX_hydrolase_CS"/>
</dbReference>
<dbReference type="InterPro" id="IPR000086">
    <property type="entry name" value="NUDIX_hydrolase_dom"/>
</dbReference>
<dbReference type="InterPro" id="IPR022925">
    <property type="entry name" value="RNA_Hydrolase_NudC"/>
</dbReference>
<dbReference type="InterPro" id="IPR015376">
    <property type="entry name" value="Znr_NADH_PPase"/>
</dbReference>
<dbReference type="NCBIfam" id="NF001299">
    <property type="entry name" value="PRK00241.1"/>
    <property type="match status" value="1"/>
</dbReference>
<dbReference type="PANTHER" id="PTHR42904:SF6">
    <property type="entry name" value="NAD-CAPPED RNA HYDROLASE NUDT12"/>
    <property type="match status" value="1"/>
</dbReference>
<dbReference type="PANTHER" id="PTHR42904">
    <property type="entry name" value="NUDIX HYDROLASE, NUDC SUBFAMILY"/>
    <property type="match status" value="1"/>
</dbReference>
<dbReference type="Pfam" id="PF00293">
    <property type="entry name" value="NUDIX"/>
    <property type="match status" value="1"/>
</dbReference>
<dbReference type="Pfam" id="PF09297">
    <property type="entry name" value="Zn_ribbon_NUD"/>
    <property type="match status" value="1"/>
</dbReference>
<dbReference type="SUPFAM" id="SSF55811">
    <property type="entry name" value="Nudix"/>
    <property type="match status" value="2"/>
</dbReference>
<dbReference type="PROSITE" id="PS51462">
    <property type="entry name" value="NUDIX"/>
    <property type="match status" value="1"/>
</dbReference>
<dbReference type="PROSITE" id="PS00893">
    <property type="entry name" value="NUDIX_BOX"/>
    <property type="match status" value="1"/>
</dbReference>
<protein>
    <recommendedName>
        <fullName evidence="1">NAD-capped RNA hydrolase NudC</fullName>
        <shortName evidence="1">DeNADding enzyme NudC</shortName>
        <ecNumber evidence="1">3.6.1.-</ecNumber>
    </recommendedName>
    <alternativeName>
        <fullName evidence="1">NADH pyrophosphatase</fullName>
        <ecNumber evidence="1">3.6.1.22</ecNumber>
    </alternativeName>
</protein>